<sequence length="317" mass="33515">MYTKIIGTGSYLPEQVRTNADLEKMVDTSDEWIVTRTGIRERHIAAPNETVSTMGFEAATRAIEMAGIEKDQIGLIVVATTSATHAFPSAACQIQSMLGIKGCPAFDVAAACAGFTYALSVADQYVKSGAVKYALVVGSDVLARTCDPTDRGTIIIFGDGAGAAVLAASEEPGIISTHLHADGSYGELLTLPNADRVNPENSIHLTMAGNEVFKVAVTELAHIVDETLAANNLDRSQLDWLVPHQANLRIISATAKKLGMSMDNVVVTLDRHGNTSAASVPCALDEAVRDGRIKPGQLVLLEAFGGGFTWGSALVRF</sequence>
<evidence type="ECO:0000255" key="1">
    <source>
        <dbReference type="HAMAP-Rule" id="MF_01815"/>
    </source>
</evidence>
<gene>
    <name evidence="1" type="primary">fabH</name>
    <name type="ordered locus">Ecok1_09810</name>
    <name type="ORF">APECO1_172</name>
</gene>
<comment type="function">
    <text evidence="1">Catalyzes the condensation reaction of fatty acid synthesis by the addition to an acyl acceptor of two carbons from malonyl-ACP. Catalyzes the first condensation reaction which initiates fatty acid synthesis and may therefore play a role in governing the total rate of fatty acid production. Possesses both acetoacetyl-ACP synthase and acetyl transacylase activities. Its substrate specificity determines the biosynthesis of branched-chain and/or straight-chain of fatty acids.</text>
</comment>
<comment type="catalytic activity">
    <reaction evidence="1">
        <text>malonyl-[ACP] + acetyl-CoA + H(+) = 3-oxobutanoyl-[ACP] + CO2 + CoA</text>
        <dbReference type="Rhea" id="RHEA:12080"/>
        <dbReference type="Rhea" id="RHEA-COMP:9623"/>
        <dbReference type="Rhea" id="RHEA-COMP:9625"/>
        <dbReference type="ChEBI" id="CHEBI:15378"/>
        <dbReference type="ChEBI" id="CHEBI:16526"/>
        <dbReference type="ChEBI" id="CHEBI:57287"/>
        <dbReference type="ChEBI" id="CHEBI:57288"/>
        <dbReference type="ChEBI" id="CHEBI:78449"/>
        <dbReference type="ChEBI" id="CHEBI:78450"/>
        <dbReference type="EC" id="2.3.1.180"/>
    </reaction>
</comment>
<comment type="pathway">
    <text evidence="1">Lipid metabolism; fatty acid biosynthesis.</text>
</comment>
<comment type="subunit">
    <text evidence="1">Homodimer.</text>
</comment>
<comment type="subcellular location">
    <subcellularLocation>
        <location evidence="1">Cytoplasm</location>
    </subcellularLocation>
</comment>
<comment type="domain">
    <text evidence="1">The last Arg residue of the ACP-binding site is essential for the weak association between ACP/AcpP and FabH.</text>
</comment>
<comment type="similarity">
    <text evidence="1">Belongs to the thiolase-like superfamily. FabH family.</text>
</comment>
<proteinExistence type="inferred from homology"/>
<accession>A1A9Y5</accession>
<organism>
    <name type="scientific">Escherichia coli O1:K1 / APEC</name>
    <dbReference type="NCBI Taxonomy" id="405955"/>
    <lineage>
        <taxon>Bacteria</taxon>
        <taxon>Pseudomonadati</taxon>
        <taxon>Pseudomonadota</taxon>
        <taxon>Gammaproteobacteria</taxon>
        <taxon>Enterobacterales</taxon>
        <taxon>Enterobacteriaceae</taxon>
        <taxon>Escherichia</taxon>
    </lineage>
</organism>
<feature type="chain" id="PRO_1000056354" description="Beta-ketoacyl-[acyl-carrier-protein] synthase III">
    <location>
        <begin position="1"/>
        <end position="317"/>
    </location>
</feature>
<feature type="region of interest" description="ACP-binding" evidence="1">
    <location>
        <begin position="245"/>
        <end position="249"/>
    </location>
</feature>
<feature type="active site" evidence="1">
    <location>
        <position position="112"/>
    </location>
</feature>
<feature type="active site" evidence="1">
    <location>
        <position position="244"/>
    </location>
</feature>
<feature type="active site" evidence="1">
    <location>
        <position position="274"/>
    </location>
</feature>
<reference key="1">
    <citation type="journal article" date="2007" name="J. Bacteriol.">
        <title>The genome sequence of avian pathogenic Escherichia coli strain O1:K1:H7 shares strong similarities with human extraintestinal pathogenic E. coli genomes.</title>
        <authorList>
            <person name="Johnson T.J."/>
            <person name="Kariyawasam S."/>
            <person name="Wannemuehler Y."/>
            <person name="Mangiamele P."/>
            <person name="Johnson S.J."/>
            <person name="Doetkott C."/>
            <person name="Skyberg J.A."/>
            <person name="Lynne A.M."/>
            <person name="Johnson J.R."/>
            <person name="Nolan L.K."/>
        </authorList>
    </citation>
    <scope>NUCLEOTIDE SEQUENCE [LARGE SCALE GENOMIC DNA]</scope>
</reference>
<keyword id="KW-0012">Acyltransferase</keyword>
<keyword id="KW-0963">Cytoplasm</keyword>
<keyword id="KW-0275">Fatty acid biosynthesis</keyword>
<keyword id="KW-0276">Fatty acid metabolism</keyword>
<keyword id="KW-0444">Lipid biosynthesis</keyword>
<keyword id="KW-0443">Lipid metabolism</keyword>
<keyword id="KW-0511">Multifunctional enzyme</keyword>
<keyword id="KW-1185">Reference proteome</keyword>
<keyword id="KW-0808">Transferase</keyword>
<name>FABH_ECOK1</name>
<protein>
    <recommendedName>
        <fullName evidence="1">Beta-ketoacyl-[acyl-carrier-protein] synthase III</fullName>
        <shortName evidence="1">Beta-ketoacyl-ACP synthase III</shortName>
        <shortName evidence="1">KAS III</shortName>
        <ecNumber evidence="1">2.3.1.180</ecNumber>
    </recommendedName>
    <alternativeName>
        <fullName evidence="1">3-oxoacyl-[acyl-carrier-protein] synthase 3</fullName>
    </alternativeName>
    <alternativeName>
        <fullName evidence="1">3-oxoacyl-[acyl-carrier-protein] synthase III</fullName>
    </alternativeName>
</protein>
<dbReference type="EC" id="2.3.1.180" evidence="1"/>
<dbReference type="EMBL" id="CP000468">
    <property type="protein sequence ID" value="ABJ00475.1"/>
    <property type="molecule type" value="Genomic_DNA"/>
</dbReference>
<dbReference type="RefSeq" id="WP_000288132.1">
    <property type="nucleotide sequence ID" value="NZ_CADILS010000019.1"/>
</dbReference>
<dbReference type="SMR" id="A1A9Y5"/>
<dbReference type="GeneID" id="93776317"/>
<dbReference type="KEGG" id="ecv:APECO1_172"/>
<dbReference type="HOGENOM" id="CLU_039592_4_1_6"/>
<dbReference type="UniPathway" id="UPA00094"/>
<dbReference type="Proteomes" id="UP000008216">
    <property type="component" value="Chromosome"/>
</dbReference>
<dbReference type="GO" id="GO:0005737">
    <property type="term" value="C:cytoplasm"/>
    <property type="evidence" value="ECO:0007669"/>
    <property type="project" value="UniProtKB-SubCell"/>
</dbReference>
<dbReference type="GO" id="GO:0004315">
    <property type="term" value="F:3-oxoacyl-[acyl-carrier-protein] synthase activity"/>
    <property type="evidence" value="ECO:0007669"/>
    <property type="project" value="InterPro"/>
</dbReference>
<dbReference type="GO" id="GO:0033818">
    <property type="term" value="F:beta-ketoacyl-acyl-carrier-protein synthase III activity"/>
    <property type="evidence" value="ECO:0007669"/>
    <property type="project" value="UniProtKB-UniRule"/>
</dbReference>
<dbReference type="GO" id="GO:0006633">
    <property type="term" value="P:fatty acid biosynthetic process"/>
    <property type="evidence" value="ECO:0007669"/>
    <property type="project" value="UniProtKB-UniRule"/>
</dbReference>
<dbReference type="CDD" id="cd00830">
    <property type="entry name" value="KAS_III"/>
    <property type="match status" value="1"/>
</dbReference>
<dbReference type="FunFam" id="3.40.47.10:FF:000004">
    <property type="entry name" value="3-oxoacyl-[acyl-carrier-protein] synthase 3"/>
    <property type="match status" value="1"/>
</dbReference>
<dbReference type="Gene3D" id="3.40.47.10">
    <property type="match status" value="1"/>
</dbReference>
<dbReference type="HAMAP" id="MF_01815">
    <property type="entry name" value="FabH"/>
    <property type="match status" value="1"/>
</dbReference>
<dbReference type="InterPro" id="IPR013747">
    <property type="entry name" value="ACP_syn_III_C"/>
</dbReference>
<dbReference type="InterPro" id="IPR013751">
    <property type="entry name" value="ACP_syn_III_N"/>
</dbReference>
<dbReference type="InterPro" id="IPR004655">
    <property type="entry name" value="FabH"/>
</dbReference>
<dbReference type="InterPro" id="IPR016039">
    <property type="entry name" value="Thiolase-like"/>
</dbReference>
<dbReference type="NCBIfam" id="TIGR00747">
    <property type="entry name" value="fabH"/>
    <property type="match status" value="1"/>
</dbReference>
<dbReference type="NCBIfam" id="NF006829">
    <property type="entry name" value="PRK09352.1"/>
    <property type="match status" value="1"/>
</dbReference>
<dbReference type="PANTHER" id="PTHR43091">
    <property type="entry name" value="3-OXOACYL-[ACYL-CARRIER-PROTEIN] SYNTHASE"/>
    <property type="match status" value="1"/>
</dbReference>
<dbReference type="PANTHER" id="PTHR43091:SF1">
    <property type="entry name" value="BETA-KETOACYL-[ACYL-CARRIER-PROTEIN] SYNTHASE III, CHLOROPLASTIC"/>
    <property type="match status" value="1"/>
</dbReference>
<dbReference type="Pfam" id="PF08545">
    <property type="entry name" value="ACP_syn_III"/>
    <property type="match status" value="1"/>
</dbReference>
<dbReference type="Pfam" id="PF08541">
    <property type="entry name" value="ACP_syn_III_C"/>
    <property type="match status" value="1"/>
</dbReference>
<dbReference type="SUPFAM" id="SSF53901">
    <property type="entry name" value="Thiolase-like"/>
    <property type="match status" value="1"/>
</dbReference>